<sequence>MGSKTPDGHRQGPNESSTGGTIAVLNPPKSASASGLVQDASGEDDEDGDDDEEKAGTDLNSRAQPNNDGKKRKRKNNKKKKKKRPLSGQQTTPPRVALSSIFSGQRYPEGEIVKYVTNDDNLQRTTAEELRHLSVVNNMDDTFLSDYRQAAEVHRQVRRYVQTIAKPGISMSELAQEIEDGVRALTGHQGIETGDALKAGLAFPTGLCLNNVAAHWTPNPGTKEVILGHDDVLKIDFGVHVHGRIVDSAFTVAFNPVYDNLLTAVRAATNTGLKEAGIDARIDHISGEIQEVMESYEVEINGNLIPVKALRSLSGHNILRYKIHGEKQVPFVKSKTTQRMEEGDVFAIETFGSTGKGYTRDEAGVYGYGLNEHVSATGLRHASAKSLLKTIRENFGTLVFSRRYLEHMGVKNYHLGMRSLISNDIVECYAPLVDVPGSYVAQFEHTVLLRPNCKEVISRGDDY</sequence>
<gene>
    <name type="ORF">MCYG_01113</name>
</gene>
<reference key="1">
    <citation type="journal article" date="2012" name="MBio">
        <title>Comparative genome analysis of Trichophyton rubrum and related dermatophytes reveals candidate genes involved in infection.</title>
        <authorList>
            <person name="Martinez D.A."/>
            <person name="Oliver B.G."/>
            <person name="Graeser Y."/>
            <person name="Goldberg J.M."/>
            <person name="Li W."/>
            <person name="Martinez-Rossi N.M."/>
            <person name="Monod M."/>
            <person name="Shelest E."/>
            <person name="Barton R.C."/>
            <person name="Birch E."/>
            <person name="Brakhage A.A."/>
            <person name="Chen Z."/>
            <person name="Gurr S.J."/>
            <person name="Heiman D."/>
            <person name="Heitman J."/>
            <person name="Kosti I."/>
            <person name="Rossi A."/>
            <person name="Saif S."/>
            <person name="Samalova M."/>
            <person name="Saunders C.W."/>
            <person name="Shea T."/>
            <person name="Summerbell R.C."/>
            <person name="Xu J."/>
            <person name="Young S."/>
            <person name="Zeng Q."/>
            <person name="Birren B.W."/>
            <person name="Cuomo C.A."/>
            <person name="White T.C."/>
        </authorList>
    </citation>
    <scope>NUCLEOTIDE SEQUENCE [LARGE SCALE GENOMIC DNA]</scope>
    <source>
        <strain>ATCC MYA-4605 / CBS 113480</strain>
    </source>
</reference>
<proteinExistence type="inferred from homology"/>
<comment type="function">
    <text evidence="1">Cotranslationally removes the N-terminal methionine from nascent proteins. The N-terminal methionine is often cleaved when the second residue in the primary sequence is small and uncharged (Met-Ala-, Cys, Gly, Pro, Ser, Thr, or Val).</text>
</comment>
<comment type="catalytic activity">
    <reaction evidence="1">
        <text>Release of N-terminal amino acids, preferentially methionine, from peptides and arylamides.</text>
        <dbReference type="EC" id="3.4.11.18"/>
    </reaction>
</comment>
<comment type="cofactor">
    <cofactor evidence="1">
        <name>Co(2+)</name>
        <dbReference type="ChEBI" id="CHEBI:48828"/>
    </cofactor>
    <cofactor evidence="1">
        <name>Zn(2+)</name>
        <dbReference type="ChEBI" id="CHEBI:29105"/>
    </cofactor>
    <cofactor evidence="1">
        <name>Mn(2+)</name>
        <dbReference type="ChEBI" id="CHEBI:29035"/>
    </cofactor>
    <cofactor evidence="1">
        <name>Fe(2+)</name>
        <dbReference type="ChEBI" id="CHEBI:29033"/>
    </cofactor>
    <text evidence="1">Binds 2 divalent metal cations per subunit. Has a high-affinity and a low affinity metal-binding site. The true nature of the physiological cofactor is under debate. The enzyme is active with cobalt, zinc, manganese or divalent iron ions. Most likely, methionine aminopeptidases function as mononuclear Fe(2+)-metalloproteases under physiological conditions, and the catalytically relevant metal-binding site has been assigned to the histidine-containing high-affinity site.</text>
</comment>
<comment type="subcellular location">
    <subcellularLocation>
        <location evidence="1">Cytoplasm</location>
    </subcellularLocation>
</comment>
<comment type="similarity">
    <text evidence="1">Belongs to the peptidase M24A family. Methionine aminopeptidase eukaryotic type 2 subfamily.</text>
</comment>
<accession>C5FEJ1</accession>
<protein>
    <recommendedName>
        <fullName evidence="1">Methionine aminopeptidase 2-1</fullName>
        <shortName evidence="1">MAP 2-1</shortName>
        <shortName evidence="1">MetAP 2-1</shortName>
        <ecNumber evidence="1">3.4.11.18</ecNumber>
    </recommendedName>
    <alternativeName>
        <fullName evidence="1">Peptidase M</fullName>
    </alternativeName>
</protein>
<organism>
    <name type="scientific">Arthroderma otae (strain ATCC MYA-4605 / CBS 113480)</name>
    <name type="common">Microsporum canis</name>
    <dbReference type="NCBI Taxonomy" id="554155"/>
    <lineage>
        <taxon>Eukaryota</taxon>
        <taxon>Fungi</taxon>
        <taxon>Dikarya</taxon>
        <taxon>Ascomycota</taxon>
        <taxon>Pezizomycotina</taxon>
        <taxon>Eurotiomycetes</taxon>
        <taxon>Eurotiomycetidae</taxon>
        <taxon>Onygenales</taxon>
        <taxon>Arthrodermataceae</taxon>
        <taxon>Microsporum</taxon>
    </lineage>
</organism>
<dbReference type="EC" id="3.4.11.18" evidence="1"/>
<dbReference type="EMBL" id="DS995701">
    <property type="protein sequence ID" value="EEQ28225.1"/>
    <property type="molecule type" value="Genomic_DNA"/>
</dbReference>
<dbReference type="RefSeq" id="XP_002851009.1">
    <property type="nucleotide sequence ID" value="XM_002850963.1"/>
</dbReference>
<dbReference type="SMR" id="C5FEJ1"/>
<dbReference type="STRING" id="554155.C5FEJ1"/>
<dbReference type="GeneID" id="9228470"/>
<dbReference type="VEuPathDB" id="FungiDB:MCYG_01113"/>
<dbReference type="eggNOG" id="KOG2775">
    <property type="taxonomic scope" value="Eukaryota"/>
</dbReference>
<dbReference type="HOGENOM" id="CLU_015857_7_1_1"/>
<dbReference type="OMA" id="ILRYHIH"/>
<dbReference type="OrthoDB" id="7848262at2759"/>
<dbReference type="Proteomes" id="UP000002035">
    <property type="component" value="Unassembled WGS sequence"/>
</dbReference>
<dbReference type="GO" id="GO:0005737">
    <property type="term" value="C:cytoplasm"/>
    <property type="evidence" value="ECO:0007669"/>
    <property type="project" value="UniProtKB-SubCell"/>
</dbReference>
<dbReference type="GO" id="GO:0004239">
    <property type="term" value="F:initiator methionyl aminopeptidase activity"/>
    <property type="evidence" value="ECO:0007669"/>
    <property type="project" value="UniProtKB-UniRule"/>
</dbReference>
<dbReference type="GO" id="GO:0046872">
    <property type="term" value="F:metal ion binding"/>
    <property type="evidence" value="ECO:0007669"/>
    <property type="project" value="UniProtKB-UniRule"/>
</dbReference>
<dbReference type="GO" id="GO:0070006">
    <property type="term" value="F:metalloaminopeptidase activity"/>
    <property type="evidence" value="ECO:0007669"/>
    <property type="project" value="UniProtKB-UniRule"/>
</dbReference>
<dbReference type="GO" id="GO:0006508">
    <property type="term" value="P:proteolysis"/>
    <property type="evidence" value="ECO:0007669"/>
    <property type="project" value="UniProtKB-KW"/>
</dbReference>
<dbReference type="CDD" id="cd01088">
    <property type="entry name" value="MetAP2"/>
    <property type="match status" value="1"/>
</dbReference>
<dbReference type="Gene3D" id="3.90.230.10">
    <property type="entry name" value="Creatinase/methionine aminopeptidase superfamily"/>
    <property type="match status" value="1"/>
</dbReference>
<dbReference type="Gene3D" id="1.10.10.10">
    <property type="entry name" value="Winged helix-like DNA-binding domain superfamily/Winged helix DNA-binding domain"/>
    <property type="match status" value="1"/>
</dbReference>
<dbReference type="HAMAP" id="MF_03175">
    <property type="entry name" value="MetAP_2_euk"/>
    <property type="match status" value="1"/>
</dbReference>
<dbReference type="InterPro" id="IPR036005">
    <property type="entry name" value="Creatinase/aminopeptidase-like"/>
</dbReference>
<dbReference type="InterPro" id="IPR050247">
    <property type="entry name" value="Met_Aminopeptidase_Type2"/>
</dbReference>
<dbReference type="InterPro" id="IPR000994">
    <property type="entry name" value="Pept_M24"/>
</dbReference>
<dbReference type="InterPro" id="IPR001714">
    <property type="entry name" value="Pept_M24_MAP"/>
</dbReference>
<dbReference type="InterPro" id="IPR002468">
    <property type="entry name" value="Pept_M24A_MAP2"/>
</dbReference>
<dbReference type="InterPro" id="IPR036388">
    <property type="entry name" value="WH-like_DNA-bd_sf"/>
</dbReference>
<dbReference type="InterPro" id="IPR036390">
    <property type="entry name" value="WH_DNA-bd_sf"/>
</dbReference>
<dbReference type="NCBIfam" id="TIGR00501">
    <property type="entry name" value="met_pdase_II"/>
    <property type="match status" value="1"/>
</dbReference>
<dbReference type="PANTHER" id="PTHR45777">
    <property type="entry name" value="METHIONINE AMINOPEPTIDASE 2"/>
    <property type="match status" value="1"/>
</dbReference>
<dbReference type="PANTHER" id="PTHR45777:SF1">
    <property type="entry name" value="METHIONINE AMINOPEPTIDASE 2-2"/>
    <property type="match status" value="1"/>
</dbReference>
<dbReference type="Pfam" id="PF00557">
    <property type="entry name" value="Peptidase_M24"/>
    <property type="match status" value="1"/>
</dbReference>
<dbReference type="PRINTS" id="PR00599">
    <property type="entry name" value="MAPEPTIDASE"/>
</dbReference>
<dbReference type="SUPFAM" id="SSF55920">
    <property type="entry name" value="Creatinase/aminopeptidase"/>
    <property type="match status" value="1"/>
</dbReference>
<dbReference type="SUPFAM" id="SSF46785">
    <property type="entry name" value="Winged helix' DNA-binding domain"/>
    <property type="match status" value="1"/>
</dbReference>
<name>MAP21_ARTOC</name>
<evidence type="ECO:0000255" key="1">
    <source>
        <dbReference type="HAMAP-Rule" id="MF_03175"/>
    </source>
</evidence>
<evidence type="ECO:0000256" key="2">
    <source>
        <dbReference type="SAM" id="MobiDB-lite"/>
    </source>
</evidence>
<keyword id="KW-0031">Aminopeptidase</keyword>
<keyword id="KW-0963">Cytoplasm</keyword>
<keyword id="KW-0378">Hydrolase</keyword>
<keyword id="KW-0479">Metal-binding</keyword>
<keyword id="KW-0645">Protease</keyword>
<keyword id="KW-1185">Reference proteome</keyword>
<feature type="chain" id="PRO_0000407619" description="Methionine aminopeptidase 2-1">
    <location>
        <begin position="1"/>
        <end position="463"/>
    </location>
</feature>
<feature type="region of interest" description="Disordered" evidence="2">
    <location>
        <begin position="1"/>
        <end position="96"/>
    </location>
</feature>
<feature type="compositionally biased region" description="Basic and acidic residues" evidence="2">
    <location>
        <begin position="1"/>
        <end position="12"/>
    </location>
</feature>
<feature type="compositionally biased region" description="Acidic residues" evidence="2">
    <location>
        <begin position="41"/>
        <end position="53"/>
    </location>
</feature>
<feature type="compositionally biased region" description="Polar residues" evidence="2">
    <location>
        <begin position="58"/>
        <end position="67"/>
    </location>
</feature>
<feature type="compositionally biased region" description="Basic residues" evidence="2">
    <location>
        <begin position="70"/>
        <end position="85"/>
    </location>
</feature>
<feature type="binding site" evidence="1">
    <location>
        <position position="215"/>
    </location>
    <ligand>
        <name>substrate</name>
    </ligand>
</feature>
<feature type="binding site" evidence="1">
    <location>
        <position position="236"/>
    </location>
    <ligand>
        <name>a divalent metal cation</name>
        <dbReference type="ChEBI" id="CHEBI:60240"/>
        <label>1</label>
    </ligand>
</feature>
<feature type="binding site" evidence="1">
    <location>
        <position position="247"/>
    </location>
    <ligand>
        <name>a divalent metal cation</name>
        <dbReference type="ChEBI" id="CHEBI:60240"/>
        <label>1</label>
    </ligand>
</feature>
<feature type="binding site" evidence="1">
    <location>
        <position position="247"/>
    </location>
    <ligand>
        <name>a divalent metal cation</name>
        <dbReference type="ChEBI" id="CHEBI:60240"/>
        <label>2</label>
        <note>catalytic</note>
    </ligand>
</feature>
<feature type="binding site" evidence="1">
    <location>
        <position position="316"/>
    </location>
    <ligand>
        <name>a divalent metal cation</name>
        <dbReference type="ChEBI" id="CHEBI:60240"/>
        <label>2</label>
        <note>catalytic</note>
    </ligand>
</feature>
<feature type="binding site" evidence="1">
    <location>
        <position position="324"/>
    </location>
    <ligand>
        <name>substrate</name>
    </ligand>
</feature>
<feature type="binding site" evidence="1">
    <location>
        <position position="349"/>
    </location>
    <ligand>
        <name>a divalent metal cation</name>
        <dbReference type="ChEBI" id="CHEBI:60240"/>
        <label>2</label>
        <note>catalytic</note>
    </ligand>
</feature>
<feature type="binding site" evidence="1">
    <location>
        <position position="444"/>
    </location>
    <ligand>
        <name>a divalent metal cation</name>
        <dbReference type="ChEBI" id="CHEBI:60240"/>
        <label>1</label>
    </ligand>
</feature>
<feature type="binding site" evidence="1">
    <location>
        <position position="444"/>
    </location>
    <ligand>
        <name>a divalent metal cation</name>
        <dbReference type="ChEBI" id="CHEBI:60240"/>
        <label>2</label>
        <note>catalytic</note>
    </ligand>
</feature>